<comment type="function">
    <text evidence="1">Single strand-specific metallo-endoribonuclease involved in late-stage 70S ribosome quality control and in maturation of the 3' terminus of the 16S rRNA.</text>
</comment>
<comment type="cofactor">
    <cofactor evidence="1">
        <name>Zn(2+)</name>
        <dbReference type="ChEBI" id="CHEBI:29105"/>
    </cofactor>
    <text evidence="1">Binds 1 zinc ion.</text>
</comment>
<comment type="subcellular location">
    <subcellularLocation>
        <location evidence="1">Cytoplasm</location>
    </subcellularLocation>
</comment>
<comment type="similarity">
    <text evidence="1">Belongs to the endoribonuclease YbeY family.</text>
</comment>
<protein>
    <recommendedName>
        <fullName evidence="1">Endoribonuclease YbeY</fullName>
        <ecNumber evidence="1">3.1.-.-</ecNumber>
    </recommendedName>
</protein>
<sequence>MKISLSLQQDFQSPELELKRAQLKKIIETTLRHVGYKEDCEIGIACVDLEESHQLNLQYREKDKPTNVLSFPSDIPEEVLPMLDALPLGDLVICIPVVLQEALEQKKTAQNHFAHLLVHGVLHLLGYDHETSDEDAEEMEGLEIEILAKLNIANPYQE</sequence>
<proteinExistence type="inferred from homology"/>
<accession>B2HZ57</accession>
<reference key="1">
    <citation type="journal article" date="2008" name="Antimicrob. Agents Chemother.">
        <title>Whole-genome pyrosequencing of an epidemic multidrug-resistant Acinetobacter baumannii strain belonging to the European clone II group.</title>
        <authorList>
            <person name="Iacono M."/>
            <person name="Villa L."/>
            <person name="Fortini D."/>
            <person name="Bordoni R."/>
            <person name="Imperi F."/>
            <person name="Bonnal R.J."/>
            <person name="Sicheritz-Ponten T."/>
            <person name="De Bellis G."/>
            <person name="Visca P."/>
            <person name="Cassone A."/>
            <person name="Carattoli A."/>
        </authorList>
    </citation>
    <scope>NUCLEOTIDE SEQUENCE [LARGE SCALE GENOMIC DNA]</scope>
    <source>
        <strain>ACICU</strain>
    </source>
</reference>
<feature type="chain" id="PRO_1000089141" description="Endoribonuclease YbeY">
    <location>
        <begin position="1"/>
        <end position="158"/>
    </location>
</feature>
<feature type="binding site" evidence="1">
    <location>
        <position position="119"/>
    </location>
    <ligand>
        <name>Zn(2+)</name>
        <dbReference type="ChEBI" id="CHEBI:29105"/>
        <note>catalytic</note>
    </ligand>
</feature>
<feature type="binding site" evidence="1">
    <location>
        <position position="123"/>
    </location>
    <ligand>
        <name>Zn(2+)</name>
        <dbReference type="ChEBI" id="CHEBI:29105"/>
        <note>catalytic</note>
    </ligand>
</feature>
<feature type="binding site" evidence="1">
    <location>
        <position position="129"/>
    </location>
    <ligand>
        <name>Zn(2+)</name>
        <dbReference type="ChEBI" id="CHEBI:29105"/>
        <note>catalytic</note>
    </ligand>
</feature>
<keyword id="KW-0963">Cytoplasm</keyword>
<keyword id="KW-0255">Endonuclease</keyword>
<keyword id="KW-0378">Hydrolase</keyword>
<keyword id="KW-0479">Metal-binding</keyword>
<keyword id="KW-0540">Nuclease</keyword>
<keyword id="KW-0690">Ribosome biogenesis</keyword>
<keyword id="KW-0698">rRNA processing</keyword>
<keyword id="KW-0862">Zinc</keyword>
<organism>
    <name type="scientific">Acinetobacter baumannii (strain ACICU)</name>
    <dbReference type="NCBI Taxonomy" id="405416"/>
    <lineage>
        <taxon>Bacteria</taxon>
        <taxon>Pseudomonadati</taxon>
        <taxon>Pseudomonadota</taxon>
        <taxon>Gammaproteobacteria</taxon>
        <taxon>Moraxellales</taxon>
        <taxon>Moraxellaceae</taxon>
        <taxon>Acinetobacter</taxon>
        <taxon>Acinetobacter calcoaceticus/baumannii complex</taxon>
    </lineage>
</organism>
<name>YBEY_ACIBC</name>
<gene>
    <name evidence="1" type="primary">ybeY</name>
    <name type="ordered locus">ACICU_03227</name>
</gene>
<dbReference type="EC" id="3.1.-.-" evidence="1"/>
<dbReference type="EMBL" id="CP000863">
    <property type="protein sequence ID" value="ACC58539.1"/>
    <property type="molecule type" value="Genomic_DNA"/>
</dbReference>
<dbReference type="RefSeq" id="WP_000703571.1">
    <property type="nucleotide sequence ID" value="NZ_CP031380.1"/>
</dbReference>
<dbReference type="SMR" id="B2HZ57"/>
<dbReference type="GeneID" id="92895262"/>
<dbReference type="KEGG" id="abc:ACICU_03227"/>
<dbReference type="HOGENOM" id="CLU_106710_0_1_6"/>
<dbReference type="Proteomes" id="UP000008839">
    <property type="component" value="Chromosome"/>
</dbReference>
<dbReference type="GO" id="GO:0005737">
    <property type="term" value="C:cytoplasm"/>
    <property type="evidence" value="ECO:0007669"/>
    <property type="project" value="UniProtKB-SubCell"/>
</dbReference>
<dbReference type="GO" id="GO:0004222">
    <property type="term" value="F:metalloendopeptidase activity"/>
    <property type="evidence" value="ECO:0007669"/>
    <property type="project" value="InterPro"/>
</dbReference>
<dbReference type="GO" id="GO:0004521">
    <property type="term" value="F:RNA endonuclease activity"/>
    <property type="evidence" value="ECO:0007669"/>
    <property type="project" value="UniProtKB-UniRule"/>
</dbReference>
<dbReference type="GO" id="GO:0008270">
    <property type="term" value="F:zinc ion binding"/>
    <property type="evidence" value="ECO:0007669"/>
    <property type="project" value="UniProtKB-UniRule"/>
</dbReference>
<dbReference type="GO" id="GO:0006364">
    <property type="term" value="P:rRNA processing"/>
    <property type="evidence" value="ECO:0007669"/>
    <property type="project" value="UniProtKB-UniRule"/>
</dbReference>
<dbReference type="Gene3D" id="3.40.390.30">
    <property type="entry name" value="Metalloproteases ('zincins'), catalytic domain"/>
    <property type="match status" value="1"/>
</dbReference>
<dbReference type="HAMAP" id="MF_00009">
    <property type="entry name" value="Endoribonucl_YbeY"/>
    <property type="match status" value="1"/>
</dbReference>
<dbReference type="InterPro" id="IPR023091">
    <property type="entry name" value="MetalPrtase_cat_dom_sf_prd"/>
</dbReference>
<dbReference type="InterPro" id="IPR002036">
    <property type="entry name" value="YbeY"/>
</dbReference>
<dbReference type="InterPro" id="IPR020549">
    <property type="entry name" value="YbeY_CS"/>
</dbReference>
<dbReference type="NCBIfam" id="TIGR00043">
    <property type="entry name" value="rRNA maturation RNase YbeY"/>
    <property type="match status" value="1"/>
</dbReference>
<dbReference type="PANTHER" id="PTHR46986">
    <property type="entry name" value="ENDORIBONUCLEASE YBEY, CHLOROPLASTIC"/>
    <property type="match status" value="1"/>
</dbReference>
<dbReference type="PANTHER" id="PTHR46986:SF1">
    <property type="entry name" value="ENDORIBONUCLEASE YBEY, CHLOROPLASTIC"/>
    <property type="match status" value="1"/>
</dbReference>
<dbReference type="Pfam" id="PF02130">
    <property type="entry name" value="YbeY"/>
    <property type="match status" value="1"/>
</dbReference>
<dbReference type="SUPFAM" id="SSF55486">
    <property type="entry name" value="Metalloproteases ('zincins'), catalytic domain"/>
    <property type="match status" value="1"/>
</dbReference>
<dbReference type="PROSITE" id="PS01306">
    <property type="entry name" value="UPF0054"/>
    <property type="match status" value="1"/>
</dbReference>
<evidence type="ECO:0000255" key="1">
    <source>
        <dbReference type="HAMAP-Rule" id="MF_00009"/>
    </source>
</evidence>